<comment type="function">
    <text evidence="2">Involved in the methylaspartate cycle. Catalyzes the biosynthesis of malate in two steps. In the first reaction acetyl-CoA is condensed reversibly with glyoxylate to form (S)-malyl-CoA. In the second reaction (S)-malyl-CoA is hydrolyzed to malate and CoA. It can also catalyze the condensation of propionyl-CoA with glyoxylate and of acetyl-CoA with pyruvate, however the CoA-ester hydrolysis reaction is highly specific for (S)-malyl-CoA.</text>
</comment>
<comment type="catalytic activity">
    <reaction evidence="2">
        <text>(S)-malyl-CoA = glyoxylate + acetyl-CoA</text>
        <dbReference type="Rhea" id="RHEA:16629"/>
        <dbReference type="ChEBI" id="CHEBI:36655"/>
        <dbReference type="ChEBI" id="CHEBI:57288"/>
        <dbReference type="ChEBI" id="CHEBI:57317"/>
        <dbReference type="EC" id="4.1.3.24"/>
    </reaction>
</comment>
<comment type="catalytic activity">
    <reaction evidence="2">
        <text>(S)-malyl-CoA + H2O = (S)-malate + CoA + H(+)</text>
        <dbReference type="Rhea" id="RHEA:38291"/>
        <dbReference type="ChEBI" id="CHEBI:15377"/>
        <dbReference type="ChEBI" id="CHEBI:15378"/>
        <dbReference type="ChEBI" id="CHEBI:15589"/>
        <dbReference type="ChEBI" id="CHEBI:57287"/>
        <dbReference type="ChEBI" id="CHEBI:57317"/>
        <dbReference type="EC" id="3.1.2.30"/>
    </reaction>
</comment>
<comment type="cofactor">
    <cofactor evidence="2">
        <name>Mg(2+)</name>
        <dbReference type="ChEBI" id="CHEBI:18420"/>
    </cofactor>
    <cofactor evidence="2">
        <name>Mn(2+)</name>
        <dbReference type="ChEBI" id="CHEBI:29035"/>
    </cofactor>
    <cofactor evidence="2">
        <name>Co(2+)</name>
        <dbReference type="ChEBI" id="CHEBI:48828"/>
    </cofactor>
    <cofactor evidence="2">
        <name>Ca(2+)</name>
        <dbReference type="ChEBI" id="CHEBI:29108"/>
    </cofactor>
    <text evidence="2">Divalent cations. Mg(2+) and to a lesser extent, Mn(2+), Co(2+) and Ca(2+).</text>
</comment>
<comment type="biophysicochemical properties">
    <kinetics>
        <KM evidence="2">0.09 mM for (S)-malyl-CoA (cleavage reaction)</KM>
        <KM evidence="2">0.4 mM for acetyl-CoA (condensation reaction with glyoxylate)</KM>
        <KM evidence="2">0.48 mM for glyoxylate (condensation reaction with acetyl-CoA)</KM>
        <KM evidence="2">0.58 mM for (S)-citramalyl-CoA (cleavage reaction)</KM>
        <KM evidence="2">0.78 mM for erythro-beta-methylmalyl-CoA (cleavage reaction)</KM>
        <KM evidence="2">0.8 mM for glyoxylate (condensation reaction with propionyl-CoA)</KM>
        <KM evidence="2">8.9 mM for propionyl-CoA (condensation reaction with glyoxylate)</KM>
        <KM evidence="2">30.2 mM for pyruvate (condensation reaction with acetyl-CoA)</KM>
        <Vmax evidence="2">28.4 umol/min/mg enzyme toward acetyl-CoA (condensation reaction with glyoxylate)</Vmax>
        <Vmax evidence="2">3.0 umol/min/mg enzyme toward (S)-citramalyl-CoA (cleavage reaction)</Vmax>
        <Vmax evidence="2">0.72 umol/min/mg enzyme toward propionyl-CoA (condensation reaction with glyoxylate)</Vmax>
        <Vmax evidence="2">0.31 umol/min/mg enzyme toward (S)-malyl-CoA (cleavage reaction)</Vmax>
        <Vmax evidence="2">0.2 umol/min/mg enzyme toward erythro-beta-methylmalyl-CoA (for cleavage reaction)</Vmax>
        <Vmax evidence="2">0.12 umol/min/mg enzyme toward acetyl-CoA (for condensation reaction with pyruvate)</Vmax>
    </kinetics>
</comment>
<comment type="similarity">
    <text evidence="3">Belongs to the HpcH/HpaI aldolase family.</text>
</comment>
<sequence>MSVTRHYDREFVRTFFTSPTAVDGEEDSAKMLRSAGQLRGLQAPDVWVPDNEDATAPNMRAEGVENIIDVVANQGAEFPGEIHPRVVWHRESPATRYKGFQQMLEITDPENGAVEHIDGFVIPEVGDIDDWKKADEFFTIIEHEHGLEEGSLSMSVIVESGEAELAMGDLREEMGKPSNNLERMFLLVDGEVDYTKDMRAMTPTGELPPWPELRHNTSRGASAAGLIAVDGPYDDIRDVEGYRERMKDNRAKGMTGIWSLTPGQVVEANTAPLPPKTGSWLLEAGGQEVELEAQDGKQVYDGDDLSLEEVSDGGYVLQAGGDRLELDEDELTEELLDRTAYIPSMTDIVDSMEEFEAAKEAGKGAIAMTQAATLVINGVEVDISKDRMWDEATYQAAQTPITLFQDVYEHRPDQHEELAEMYGADIVERATAVGN</sequence>
<feature type="chain" id="PRO_0000429372" description="Apparent malate synthase">
    <location>
        <begin position="1"/>
        <end position="435"/>
    </location>
</feature>
<feature type="binding site" evidence="1">
    <location>
        <position position="159"/>
    </location>
    <ligand>
        <name>Mg(2+)</name>
        <dbReference type="ChEBI" id="CHEBI:18420"/>
    </ligand>
</feature>
<feature type="binding site" evidence="1">
    <location>
        <position position="159"/>
    </location>
    <ligand>
        <name>substrate</name>
    </ligand>
</feature>
<feature type="binding site" evidence="1">
    <location>
        <position position="180"/>
    </location>
    <ligand>
        <name>Mg(2+)</name>
        <dbReference type="ChEBI" id="CHEBI:18420"/>
    </ligand>
</feature>
<reference key="1">
    <citation type="journal article" date="2004" name="Genome Res.">
        <title>Genome sequence of Haloarcula marismortui: a halophilic archaeon from the Dead Sea.</title>
        <authorList>
            <person name="Baliga N.S."/>
            <person name="Bonneau R."/>
            <person name="Facciotti M.T."/>
            <person name="Pan M."/>
            <person name="Glusman G."/>
            <person name="Deutsch E.W."/>
            <person name="Shannon P."/>
            <person name="Chiu Y."/>
            <person name="Weng R.S."/>
            <person name="Gan R.R."/>
            <person name="Hung P."/>
            <person name="Date S.V."/>
            <person name="Marcotte E."/>
            <person name="Hood L."/>
            <person name="Ng W.V."/>
        </authorList>
    </citation>
    <scope>NUCLEOTIDE SEQUENCE [LARGE SCALE GENOMIC DNA]</scope>
    <source>
        <strain>ATCC 43049 / DSM 3752 / JCM 8966 / VKM B-1809</strain>
    </source>
</reference>
<reference key="2">
    <citation type="journal article" date="2011" name="Science">
        <title>A methylaspartate cycle in haloarchaea.</title>
        <authorList>
            <person name="Khomyakova M."/>
            <person name="Bukmez O."/>
            <person name="Thomas L.K."/>
            <person name="Erb T.J."/>
            <person name="Berg I.A."/>
        </authorList>
    </citation>
    <scope>FUNCTION</scope>
    <scope>CATALYTIC ACTIVITY</scope>
    <scope>BIOPHYSICOCHEMICAL PROPERTIES</scope>
    <scope>SUBSTRATE SPECIFICITY</scope>
    <scope>COFACTOR</scope>
    <source>
        <strain>ATCC 43049 / DSM 3752 / JCM 8966 / VKM B-1809</strain>
    </source>
</reference>
<name>AMASY_HALMA</name>
<evidence type="ECO:0000250" key="1"/>
<evidence type="ECO:0000269" key="2">
    <source>
    </source>
</evidence>
<evidence type="ECO:0000305" key="3"/>
<keyword id="KW-0106">Calcium</keyword>
<keyword id="KW-0170">Cobalt</keyword>
<keyword id="KW-0378">Hydrolase</keyword>
<keyword id="KW-0456">Lyase</keyword>
<keyword id="KW-0460">Magnesium</keyword>
<keyword id="KW-0464">Manganese</keyword>
<keyword id="KW-0479">Metal-binding</keyword>
<keyword id="KW-1185">Reference proteome</keyword>
<proteinExistence type="evidence at protein level"/>
<dbReference type="EC" id="3.1.2.30"/>
<dbReference type="EC" id="4.1.3.24"/>
<dbReference type="EMBL" id="AY596297">
    <property type="protein sequence ID" value="AAV46833.1"/>
    <property type="molecule type" value="Genomic_DNA"/>
</dbReference>
<dbReference type="RefSeq" id="WP_011223954.1">
    <property type="nucleotide sequence ID" value="NC_006396.1"/>
</dbReference>
<dbReference type="SMR" id="Q5V0X0"/>
<dbReference type="STRING" id="272569.rrnAC1965"/>
<dbReference type="PaxDb" id="272569-rrnAC1965"/>
<dbReference type="EnsemblBacteria" id="AAV46833">
    <property type="protein sequence ID" value="AAV46833"/>
    <property type="gene ID" value="rrnAC1965"/>
</dbReference>
<dbReference type="GeneID" id="40152892"/>
<dbReference type="KEGG" id="hma:rrnAC1965"/>
<dbReference type="PATRIC" id="fig|272569.17.peg.2622"/>
<dbReference type="eggNOG" id="arCOG00760">
    <property type="taxonomic scope" value="Archaea"/>
</dbReference>
<dbReference type="HOGENOM" id="CLU_629476_0_0_2"/>
<dbReference type="BioCyc" id="MetaCyc:MONOMER-16262"/>
<dbReference type="SABIO-RK" id="Q5V0X0"/>
<dbReference type="Proteomes" id="UP000001169">
    <property type="component" value="Chromosome I"/>
</dbReference>
<dbReference type="GO" id="GO:0016787">
    <property type="term" value="F:hydrolase activity"/>
    <property type="evidence" value="ECO:0007669"/>
    <property type="project" value="UniProtKB-KW"/>
</dbReference>
<dbReference type="GO" id="GO:0000287">
    <property type="term" value="F:magnesium ion binding"/>
    <property type="evidence" value="ECO:0007669"/>
    <property type="project" value="TreeGrafter"/>
</dbReference>
<dbReference type="GO" id="GO:0050083">
    <property type="term" value="F:malyl-CoA lyase activity"/>
    <property type="evidence" value="ECO:0007669"/>
    <property type="project" value="RHEA"/>
</dbReference>
<dbReference type="GO" id="GO:0006107">
    <property type="term" value="P:oxaloacetate metabolic process"/>
    <property type="evidence" value="ECO:0007669"/>
    <property type="project" value="TreeGrafter"/>
</dbReference>
<dbReference type="Gene3D" id="1.20.58.1560">
    <property type="match status" value="1"/>
</dbReference>
<dbReference type="Gene3D" id="3.20.20.60">
    <property type="entry name" value="Phosphoenolpyruvate-binding domains"/>
    <property type="match status" value="1"/>
</dbReference>
<dbReference type="InterPro" id="IPR005000">
    <property type="entry name" value="Aldolase/citrate-lyase_domain"/>
</dbReference>
<dbReference type="InterPro" id="IPR053484">
    <property type="entry name" value="Malate_Synthase-like_Aldolase"/>
</dbReference>
<dbReference type="InterPro" id="IPR015813">
    <property type="entry name" value="Pyrv/PenolPyrv_kinase-like_dom"/>
</dbReference>
<dbReference type="InterPro" id="IPR040442">
    <property type="entry name" value="Pyrv_kinase-like_dom_sf"/>
</dbReference>
<dbReference type="NCBIfam" id="NF041315">
    <property type="entry name" value="malate_syn_AceB_Halo"/>
    <property type="match status" value="1"/>
</dbReference>
<dbReference type="PANTHER" id="PTHR32308:SF10">
    <property type="entry name" value="CITRATE LYASE SUBUNIT BETA"/>
    <property type="match status" value="1"/>
</dbReference>
<dbReference type="PANTHER" id="PTHR32308">
    <property type="entry name" value="LYASE BETA SUBUNIT, PUTATIVE (AFU_ORTHOLOGUE AFUA_4G13030)-RELATED"/>
    <property type="match status" value="1"/>
</dbReference>
<dbReference type="Pfam" id="PF03328">
    <property type="entry name" value="HpcH_HpaI"/>
    <property type="match status" value="1"/>
</dbReference>
<dbReference type="SUPFAM" id="SSF51621">
    <property type="entry name" value="Phosphoenolpyruvate/pyruvate domain"/>
    <property type="match status" value="1"/>
</dbReference>
<gene>
    <name type="primary">aceB</name>
    <name type="ordered locus">rrnAC1965</name>
</gene>
<organism>
    <name type="scientific">Haloarcula marismortui (strain ATCC 43049 / DSM 3752 / JCM 8966 / VKM B-1809)</name>
    <name type="common">Halobacterium marismortui</name>
    <dbReference type="NCBI Taxonomy" id="272569"/>
    <lineage>
        <taxon>Archaea</taxon>
        <taxon>Methanobacteriati</taxon>
        <taxon>Methanobacteriota</taxon>
        <taxon>Stenosarchaea group</taxon>
        <taxon>Halobacteria</taxon>
        <taxon>Halobacteriales</taxon>
        <taxon>Haloarculaceae</taxon>
        <taxon>Haloarcula</taxon>
    </lineage>
</organism>
<protein>
    <recommendedName>
        <fullName>Apparent malate synthase</fullName>
    </recommendedName>
    <alternativeName>
        <fullName>(3S)-malyl-CoA thioesterase</fullName>
        <ecNumber>3.1.2.30</ecNumber>
    </alternativeName>
    <alternativeName>
        <fullName>(S)-malyl-CoA lyase</fullName>
        <ecNumber>4.1.3.24</ecNumber>
    </alternativeName>
</protein>
<accession>Q5V0X0</accession>